<name>HPRK_LISMH</name>
<dbReference type="EC" id="2.7.11.-" evidence="1"/>
<dbReference type="EC" id="2.7.4.-" evidence="1"/>
<dbReference type="EMBL" id="CP001175">
    <property type="protein sequence ID" value="ACK38479.1"/>
    <property type="molecule type" value="Genomic_DNA"/>
</dbReference>
<dbReference type="RefSeq" id="WP_003722615.1">
    <property type="nucleotide sequence ID" value="NC_011660.1"/>
</dbReference>
<dbReference type="SMR" id="B8DBM8"/>
<dbReference type="KEGG" id="lmh:LMHCC_0117"/>
<dbReference type="HOGENOM" id="CLU_052030_0_1_9"/>
<dbReference type="GO" id="GO:0005524">
    <property type="term" value="F:ATP binding"/>
    <property type="evidence" value="ECO:0007669"/>
    <property type="project" value="UniProtKB-UniRule"/>
</dbReference>
<dbReference type="GO" id="GO:0000287">
    <property type="term" value="F:magnesium ion binding"/>
    <property type="evidence" value="ECO:0007669"/>
    <property type="project" value="UniProtKB-UniRule"/>
</dbReference>
<dbReference type="GO" id="GO:0000155">
    <property type="term" value="F:phosphorelay sensor kinase activity"/>
    <property type="evidence" value="ECO:0007669"/>
    <property type="project" value="InterPro"/>
</dbReference>
<dbReference type="GO" id="GO:0004674">
    <property type="term" value="F:protein serine/threonine kinase activity"/>
    <property type="evidence" value="ECO:0007669"/>
    <property type="project" value="UniProtKB-KW"/>
</dbReference>
<dbReference type="GO" id="GO:0004712">
    <property type="term" value="F:protein serine/threonine/tyrosine kinase activity"/>
    <property type="evidence" value="ECO:0007669"/>
    <property type="project" value="UniProtKB-UniRule"/>
</dbReference>
<dbReference type="GO" id="GO:0006109">
    <property type="term" value="P:regulation of carbohydrate metabolic process"/>
    <property type="evidence" value="ECO:0007669"/>
    <property type="project" value="UniProtKB-UniRule"/>
</dbReference>
<dbReference type="CDD" id="cd01918">
    <property type="entry name" value="HprK_C"/>
    <property type="match status" value="1"/>
</dbReference>
<dbReference type="FunFam" id="3.40.1390.20:FF:000002">
    <property type="entry name" value="HPr kinase/phosphorylase"/>
    <property type="match status" value="1"/>
</dbReference>
<dbReference type="FunFam" id="3.40.50.300:FF:000174">
    <property type="entry name" value="HPr kinase/phosphorylase"/>
    <property type="match status" value="1"/>
</dbReference>
<dbReference type="Gene3D" id="3.40.1390.20">
    <property type="entry name" value="HprK N-terminal domain-like"/>
    <property type="match status" value="1"/>
</dbReference>
<dbReference type="Gene3D" id="3.40.50.300">
    <property type="entry name" value="P-loop containing nucleotide triphosphate hydrolases"/>
    <property type="match status" value="1"/>
</dbReference>
<dbReference type="HAMAP" id="MF_01249">
    <property type="entry name" value="HPr_kinase"/>
    <property type="match status" value="1"/>
</dbReference>
<dbReference type="InterPro" id="IPR003755">
    <property type="entry name" value="HPr(Ser)_kin/Pase"/>
</dbReference>
<dbReference type="InterPro" id="IPR011104">
    <property type="entry name" value="Hpr_kin/Pase_C"/>
</dbReference>
<dbReference type="InterPro" id="IPR011126">
    <property type="entry name" value="Hpr_kin/Pase_Hpr_N"/>
</dbReference>
<dbReference type="InterPro" id="IPR027417">
    <property type="entry name" value="P-loop_NTPase"/>
</dbReference>
<dbReference type="InterPro" id="IPR028979">
    <property type="entry name" value="Ser_kin/Pase_Hpr-like_N_sf"/>
</dbReference>
<dbReference type="NCBIfam" id="TIGR00679">
    <property type="entry name" value="hpr-ser"/>
    <property type="match status" value="1"/>
</dbReference>
<dbReference type="PANTHER" id="PTHR30305:SF1">
    <property type="entry name" value="HPR KINASE_PHOSPHORYLASE"/>
    <property type="match status" value="1"/>
</dbReference>
<dbReference type="PANTHER" id="PTHR30305">
    <property type="entry name" value="PROTEIN YJDM-RELATED"/>
    <property type="match status" value="1"/>
</dbReference>
<dbReference type="Pfam" id="PF07475">
    <property type="entry name" value="Hpr_kinase_C"/>
    <property type="match status" value="1"/>
</dbReference>
<dbReference type="Pfam" id="PF02603">
    <property type="entry name" value="Hpr_kinase_N"/>
    <property type="match status" value="1"/>
</dbReference>
<dbReference type="SUPFAM" id="SSF75138">
    <property type="entry name" value="HprK N-terminal domain-like"/>
    <property type="match status" value="1"/>
</dbReference>
<dbReference type="SUPFAM" id="SSF53795">
    <property type="entry name" value="PEP carboxykinase-like"/>
    <property type="match status" value="1"/>
</dbReference>
<evidence type="ECO:0000255" key="1">
    <source>
        <dbReference type="HAMAP-Rule" id="MF_01249"/>
    </source>
</evidence>
<reference key="1">
    <citation type="journal article" date="2011" name="J. Bacteriol.">
        <title>Genome sequence of lineage III Listeria monocytogenes strain HCC23.</title>
        <authorList>
            <person name="Steele C.L."/>
            <person name="Donaldson J.R."/>
            <person name="Paul D."/>
            <person name="Banes M.M."/>
            <person name="Arick T."/>
            <person name="Bridges S.M."/>
            <person name="Lawrence M.L."/>
        </authorList>
    </citation>
    <scope>NUCLEOTIDE SEQUENCE [LARGE SCALE GENOMIC DNA]</scope>
    <source>
        <strain>HCC23</strain>
    </source>
</reference>
<protein>
    <recommendedName>
        <fullName evidence="1">HPr kinase/phosphorylase</fullName>
        <shortName evidence="1">HPrK/P</shortName>
        <ecNumber evidence="1">2.7.11.-</ecNumber>
        <ecNumber evidence="1">2.7.4.-</ecNumber>
    </recommendedName>
    <alternativeName>
        <fullName evidence="1">HPr(Ser) kinase/phosphorylase</fullName>
    </alternativeName>
</protein>
<feature type="chain" id="PRO_1000165072" description="HPr kinase/phosphorylase">
    <location>
        <begin position="1"/>
        <end position="312"/>
    </location>
</feature>
<feature type="region of interest" description="Important for the catalytic mechanism of both phosphorylation and dephosphorylation" evidence="1">
    <location>
        <begin position="202"/>
        <end position="211"/>
    </location>
</feature>
<feature type="region of interest" description="Important for the catalytic mechanism of dephosphorylation" evidence="1">
    <location>
        <begin position="265"/>
        <end position="270"/>
    </location>
</feature>
<feature type="active site" evidence="1">
    <location>
        <position position="139"/>
    </location>
</feature>
<feature type="active site" evidence="1">
    <location>
        <position position="160"/>
    </location>
</feature>
<feature type="active site" description="Proton acceptor; for phosphorylation activity. Proton donor; for dephosphorylation activity" evidence="1">
    <location>
        <position position="178"/>
    </location>
</feature>
<feature type="active site" evidence="1">
    <location>
        <position position="244"/>
    </location>
</feature>
<feature type="binding site" evidence="1">
    <location>
        <begin position="154"/>
        <end position="161"/>
    </location>
    <ligand>
        <name>ATP</name>
        <dbReference type="ChEBI" id="CHEBI:30616"/>
    </ligand>
</feature>
<feature type="binding site" evidence="1">
    <location>
        <position position="161"/>
    </location>
    <ligand>
        <name>Mg(2+)</name>
        <dbReference type="ChEBI" id="CHEBI:18420"/>
    </ligand>
</feature>
<feature type="binding site" evidence="1">
    <location>
        <position position="203"/>
    </location>
    <ligand>
        <name>Mg(2+)</name>
        <dbReference type="ChEBI" id="CHEBI:18420"/>
    </ligand>
</feature>
<proteinExistence type="inferred from homology"/>
<gene>
    <name evidence="1" type="primary">hprK</name>
    <name type="ordered locus">LMHCC_0117</name>
</gene>
<keyword id="KW-0067">ATP-binding</keyword>
<keyword id="KW-0119">Carbohydrate metabolism</keyword>
<keyword id="KW-0418">Kinase</keyword>
<keyword id="KW-0460">Magnesium</keyword>
<keyword id="KW-0479">Metal-binding</keyword>
<keyword id="KW-0511">Multifunctional enzyme</keyword>
<keyword id="KW-0547">Nucleotide-binding</keyword>
<keyword id="KW-0723">Serine/threonine-protein kinase</keyword>
<keyword id="KW-0808">Transferase</keyword>
<comment type="function">
    <text evidence="1">Catalyzes the ATP- as well as the pyrophosphate-dependent phosphorylation of a specific serine residue in HPr, a phosphocarrier protein of the phosphoenolpyruvate-dependent sugar phosphotransferase system (PTS). HprK/P also catalyzes the pyrophosphate-producing, inorganic phosphate-dependent dephosphorylation (phosphorolysis) of seryl-phosphorylated HPr (P-Ser-HPr). The two antagonistic activities of HprK/P are regulated by several intracellular metabolites, which change their concentration in response to the absence or presence of rapidly metabolisable carbon sources (glucose, fructose, etc.) in the growth medium. Therefore, by controlling the phosphorylation state of HPr, HPrK/P is a sensor enzyme that plays a major role in the regulation of carbon metabolism and sugar transport: it mediates carbon catabolite repression (CCR), and regulates PTS-catalyzed carbohydrate uptake and inducer exclusion.</text>
</comment>
<comment type="catalytic activity">
    <reaction evidence="1">
        <text>[HPr protein]-L-serine + ATP = [HPr protein]-O-phospho-L-serine + ADP + H(+)</text>
        <dbReference type="Rhea" id="RHEA:46600"/>
        <dbReference type="Rhea" id="RHEA-COMP:11602"/>
        <dbReference type="Rhea" id="RHEA-COMP:11603"/>
        <dbReference type="ChEBI" id="CHEBI:15378"/>
        <dbReference type="ChEBI" id="CHEBI:29999"/>
        <dbReference type="ChEBI" id="CHEBI:30616"/>
        <dbReference type="ChEBI" id="CHEBI:83421"/>
        <dbReference type="ChEBI" id="CHEBI:456216"/>
    </reaction>
</comment>
<comment type="catalytic activity">
    <reaction evidence="1">
        <text>[HPr protein]-O-phospho-L-serine + phosphate + H(+) = [HPr protein]-L-serine + diphosphate</text>
        <dbReference type="Rhea" id="RHEA:46604"/>
        <dbReference type="Rhea" id="RHEA-COMP:11602"/>
        <dbReference type="Rhea" id="RHEA-COMP:11603"/>
        <dbReference type="ChEBI" id="CHEBI:15378"/>
        <dbReference type="ChEBI" id="CHEBI:29999"/>
        <dbReference type="ChEBI" id="CHEBI:33019"/>
        <dbReference type="ChEBI" id="CHEBI:43474"/>
        <dbReference type="ChEBI" id="CHEBI:83421"/>
    </reaction>
</comment>
<comment type="cofactor">
    <cofactor evidence="1">
        <name>Mg(2+)</name>
        <dbReference type="ChEBI" id="CHEBI:18420"/>
    </cofactor>
</comment>
<comment type="subunit">
    <text evidence="1">Homohexamer.</text>
</comment>
<comment type="domain">
    <text evidence="1">The Walker A ATP-binding motif also binds Pi and PPi.</text>
</comment>
<comment type="miscellaneous">
    <text evidence="1">Both phosphorylation and phosphorolysis are carried out by the same active site and suggest a common mechanism for both reactions.</text>
</comment>
<comment type="similarity">
    <text evidence="1">Belongs to the HPrK/P family.</text>
</comment>
<organism>
    <name type="scientific">Listeria monocytogenes serotype 4a (strain HCC23)</name>
    <dbReference type="NCBI Taxonomy" id="552536"/>
    <lineage>
        <taxon>Bacteria</taxon>
        <taxon>Bacillati</taxon>
        <taxon>Bacillota</taxon>
        <taxon>Bacilli</taxon>
        <taxon>Bacillales</taxon>
        <taxon>Listeriaceae</taxon>
        <taxon>Listeria</taxon>
    </lineage>
</organism>
<accession>B8DBM8</accession>
<sequence length="312" mass="34950">MTKSVTVKDLKERLNLELICSETGLERPISTSDLSRPGLELTGFFSYYPEDRVQLFGMTEISFSEGMEPEERLKRYKQMCTKRTPAFVISRNLEVPKELVAAAKEADIPVLRSRLKTTRLSVYITNYLESRLAPVISMHGVLVDIYGLGVLITGSSGVGKSETALELVKRGHRLVADDNVEIRQEDEMTLIGSSPAIIEHLLEIRGLGIINVMTLFGAGAVRSSKKITIVVHLENWDPDKHYDRVGLDQEKTKIFDMDIPKITVPVRPGRNLSVIIEVAAMNFRLKNMGYNAAEQFTQDLNNLIGHNSSMND</sequence>